<comment type="function">
    <text evidence="1">Involved in the transmission of sensory signals from the chemoreceptors to the flagellar motors. In its active (phosphorylated or acetylated) form, CheY exhibits enhanced binding to a switch component, FliM, at the flagellar motor which induces a change from counterclockwise to clockwise flagellar rotation (By similarity).</text>
</comment>
<comment type="cofactor">
    <cofactor evidence="3">
        <name>Mg(2+)</name>
        <dbReference type="ChEBI" id="CHEBI:18420"/>
    </cofactor>
    <text evidence="3">Binds 1 Mg(2+) ion per subunit.</text>
</comment>
<comment type="subcellular location">
    <subcellularLocation>
        <location evidence="1">Cytoplasm</location>
    </subcellularLocation>
</comment>
<comment type="PTM">
    <text evidence="1">Phosphorylated by CheA or acetylated by acetyl-CoA synthetase, depending on which acetate metabolism pathway is available.</text>
</comment>
<name>CHEY_SHIFL</name>
<keyword id="KW-0007">Acetylation</keyword>
<keyword id="KW-0145">Chemotaxis</keyword>
<keyword id="KW-0963">Cytoplasm</keyword>
<keyword id="KW-0283">Flagellar rotation</keyword>
<keyword id="KW-0460">Magnesium</keyword>
<keyword id="KW-0479">Metal-binding</keyword>
<keyword id="KW-0597">Phosphoprotein</keyword>
<keyword id="KW-1185">Reference proteome</keyword>
<keyword id="KW-0902">Two-component regulatory system</keyword>
<dbReference type="EMBL" id="AE005674">
    <property type="protein sequence ID" value="AAN43484.1"/>
    <property type="molecule type" value="Genomic_DNA"/>
</dbReference>
<dbReference type="EMBL" id="AE014073">
    <property type="protein sequence ID" value="AAP17314.1"/>
    <property type="molecule type" value="Genomic_DNA"/>
</dbReference>
<dbReference type="RefSeq" id="NP_707777.1">
    <property type="nucleotide sequence ID" value="NC_004337.2"/>
</dbReference>
<dbReference type="RefSeq" id="WP_000763867.1">
    <property type="nucleotide sequence ID" value="NZ_WPGW01000105.1"/>
</dbReference>
<dbReference type="BMRB" id="P0AE69"/>
<dbReference type="SMR" id="P0AE69"/>
<dbReference type="STRING" id="198214.SF1931"/>
<dbReference type="PaxDb" id="198214-SF1931"/>
<dbReference type="GeneID" id="1025094"/>
<dbReference type="GeneID" id="93776187"/>
<dbReference type="KEGG" id="sfl:SF1931"/>
<dbReference type="KEGG" id="sfx:S2022"/>
<dbReference type="PATRIC" id="fig|198214.7.peg.2306"/>
<dbReference type="HOGENOM" id="CLU_000445_69_12_6"/>
<dbReference type="Proteomes" id="UP000001006">
    <property type="component" value="Chromosome"/>
</dbReference>
<dbReference type="Proteomes" id="UP000002673">
    <property type="component" value="Chromosome"/>
</dbReference>
<dbReference type="GO" id="GO:0005737">
    <property type="term" value="C:cytoplasm"/>
    <property type="evidence" value="ECO:0007669"/>
    <property type="project" value="UniProtKB-SubCell"/>
</dbReference>
<dbReference type="GO" id="GO:0046872">
    <property type="term" value="F:metal ion binding"/>
    <property type="evidence" value="ECO:0007669"/>
    <property type="project" value="UniProtKB-KW"/>
</dbReference>
<dbReference type="GO" id="GO:0097588">
    <property type="term" value="P:archaeal or bacterial-type flagellum-dependent cell motility"/>
    <property type="evidence" value="ECO:0007669"/>
    <property type="project" value="UniProtKB-KW"/>
</dbReference>
<dbReference type="GO" id="GO:0006935">
    <property type="term" value="P:chemotaxis"/>
    <property type="evidence" value="ECO:0007669"/>
    <property type="project" value="UniProtKB-KW"/>
</dbReference>
<dbReference type="GO" id="GO:0000160">
    <property type="term" value="P:phosphorelay signal transduction system"/>
    <property type="evidence" value="ECO:0007669"/>
    <property type="project" value="UniProtKB-KW"/>
</dbReference>
<dbReference type="CDD" id="cd19923">
    <property type="entry name" value="REC_CheY_CheY3"/>
    <property type="match status" value="1"/>
</dbReference>
<dbReference type="FunFam" id="3.40.50.2300:FF:000019">
    <property type="entry name" value="Chemotaxis response regulator CheY"/>
    <property type="match status" value="1"/>
</dbReference>
<dbReference type="Gene3D" id="3.40.50.2300">
    <property type="match status" value="1"/>
</dbReference>
<dbReference type="InterPro" id="IPR011006">
    <property type="entry name" value="CheY-like_superfamily"/>
</dbReference>
<dbReference type="InterPro" id="IPR001789">
    <property type="entry name" value="Sig_transdc_resp-reg_receiver"/>
</dbReference>
<dbReference type="InterPro" id="IPR052048">
    <property type="entry name" value="ST_Response_Regulator"/>
</dbReference>
<dbReference type="NCBIfam" id="NF007901">
    <property type="entry name" value="PRK10610.1"/>
    <property type="match status" value="1"/>
</dbReference>
<dbReference type="PANTHER" id="PTHR43228">
    <property type="entry name" value="TWO-COMPONENT RESPONSE REGULATOR"/>
    <property type="match status" value="1"/>
</dbReference>
<dbReference type="PANTHER" id="PTHR43228:SF1">
    <property type="entry name" value="TWO-COMPONENT RESPONSE REGULATOR ARR22"/>
    <property type="match status" value="1"/>
</dbReference>
<dbReference type="Pfam" id="PF00072">
    <property type="entry name" value="Response_reg"/>
    <property type="match status" value="1"/>
</dbReference>
<dbReference type="SMART" id="SM00448">
    <property type="entry name" value="REC"/>
    <property type="match status" value="1"/>
</dbReference>
<dbReference type="SUPFAM" id="SSF52172">
    <property type="entry name" value="CheY-like"/>
    <property type="match status" value="1"/>
</dbReference>
<dbReference type="PROSITE" id="PS50110">
    <property type="entry name" value="RESPONSE_REGULATORY"/>
    <property type="match status" value="1"/>
</dbReference>
<protein>
    <recommendedName>
        <fullName>Chemotaxis protein CheY</fullName>
    </recommendedName>
</protein>
<gene>
    <name type="primary">cheY</name>
    <name type="ordered locus">SF1931</name>
    <name type="ordered locus">S2022</name>
</gene>
<accession>P0AE69</accession>
<accession>P06143</accession>
<sequence>MADKELKFLVVDDFSTMRRIVRNLLKELGFNNVEEAEDGVDALNKLQAGGYGFVISDWNMPNMDGLELLKTIRADGAMSALPVLMVTAEAKKENIIAAAQAGASGYVVKPFTAATLEEKLNKIFEKLGM</sequence>
<evidence type="ECO:0000250" key="1"/>
<evidence type="ECO:0000250" key="2">
    <source>
        <dbReference type="UniProtKB" id="A0A0H3AMJ9"/>
    </source>
</evidence>
<evidence type="ECO:0000250" key="3">
    <source>
        <dbReference type="UniProtKB" id="P0AE67"/>
    </source>
</evidence>
<evidence type="ECO:0000255" key="4">
    <source>
        <dbReference type="PROSITE-ProRule" id="PRU00169"/>
    </source>
</evidence>
<organism>
    <name type="scientific">Shigella flexneri</name>
    <dbReference type="NCBI Taxonomy" id="623"/>
    <lineage>
        <taxon>Bacteria</taxon>
        <taxon>Pseudomonadati</taxon>
        <taxon>Pseudomonadota</taxon>
        <taxon>Gammaproteobacteria</taxon>
        <taxon>Enterobacterales</taxon>
        <taxon>Enterobacteriaceae</taxon>
        <taxon>Shigella</taxon>
    </lineage>
</organism>
<reference key="1">
    <citation type="journal article" date="2002" name="Nucleic Acids Res.">
        <title>Genome sequence of Shigella flexneri 2a: insights into pathogenicity through comparison with genomes of Escherichia coli K12 and O157.</title>
        <authorList>
            <person name="Jin Q."/>
            <person name="Yuan Z."/>
            <person name="Xu J."/>
            <person name="Wang Y."/>
            <person name="Shen Y."/>
            <person name="Lu W."/>
            <person name="Wang J."/>
            <person name="Liu H."/>
            <person name="Yang J."/>
            <person name="Yang F."/>
            <person name="Zhang X."/>
            <person name="Zhang J."/>
            <person name="Yang G."/>
            <person name="Wu H."/>
            <person name="Qu D."/>
            <person name="Dong J."/>
            <person name="Sun L."/>
            <person name="Xue Y."/>
            <person name="Zhao A."/>
            <person name="Gao Y."/>
            <person name="Zhu J."/>
            <person name="Kan B."/>
            <person name="Ding K."/>
            <person name="Chen S."/>
            <person name="Cheng H."/>
            <person name="Yao Z."/>
            <person name="He B."/>
            <person name="Chen R."/>
            <person name="Ma D."/>
            <person name="Qiang B."/>
            <person name="Wen Y."/>
            <person name="Hou Y."/>
            <person name="Yu J."/>
        </authorList>
    </citation>
    <scope>NUCLEOTIDE SEQUENCE [LARGE SCALE GENOMIC DNA]</scope>
    <source>
        <strain>301 / Serotype 2a</strain>
    </source>
</reference>
<reference key="2">
    <citation type="journal article" date="2003" name="Infect. Immun.">
        <title>Complete genome sequence and comparative genomics of Shigella flexneri serotype 2a strain 2457T.</title>
        <authorList>
            <person name="Wei J."/>
            <person name="Goldberg M.B."/>
            <person name="Burland V."/>
            <person name="Venkatesan M.M."/>
            <person name="Deng W."/>
            <person name="Fournier G."/>
            <person name="Mayhew G.F."/>
            <person name="Plunkett G. III"/>
            <person name="Rose D.J."/>
            <person name="Darling A."/>
            <person name="Mau B."/>
            <person name="Perna N.T."/>
            <person name="Payne S.M."/>
            <person name="Runyen-Janecky L.J."/>
            <person name="Zhou S."/>
            <person name="Schwartz D.C."/>
            <person name="Blattner F.R."/>
        </authorList>
    </citation>
    <scope>NUCLEOTIDE SEQUENCE [LARGE SCALE GENOMIC DNA]</scope>
    <source>
        <strain>ATCC 700930 / 2457T / Serotype 2a</strain>
    </source>
</reference>
<proteinExistence type="inferred from homology"/>
<feature type="initiator methionine" description="Removed" evidence="1">
    <location>
        <position position="1"/>
    </location>
</feature>
<feature type="chain" id="PRO_0000081046" description="Chemotaxis protein CheY">
    <location>
        <begin position="2"/>
        <end position="129"/>
    </location>
</feature>
<feature type="domain" description="Response regulatory" evidence="4">
    <location>
        <begin position="7"/>
        <end position="124"/>
    </location>
</feature>
<feature type="binding site" evidence="2">
    <location>
        <position position="12"/>
    </location>
    <ligand>
        <name>Mg(2+)</name>
        <dbReference type="ChEBI" id="CHEBI:18420"/>
    </ligand>
</feature>
<feature type="binding site" evidence="3">
    <location>
        <position position="13"/>
    </location>
    <ligand>
        <name>Mg(2+)</name>
        <dbReference type="ChEBI" id="CHEBI:18420"/>
    </ligand>
</feature>
<feature type="binding site" evidence="3">
    <location>
        <position position="57"/>
    </location>
    <ligand>
        <name>Mg(2+)</name>
        <dbReference type="ChEBI" id="CHEBI:18420"/>
    </ligand>
</feature>
<feature type="binding site" evidence="3">
    <location>
        <position position="59"/>
    </location>
    <ligand>
        <name>Mg(2+)</name>
        <dbReference type="ChEBI" id="CHEBI:18420"/>
    </ligand>
</feature>
<feature type="modified residue" description="4-aspartylphosphate" evidence="4">
    <location>
        <position position="57"/>
    </location>
</feature>
<feature type="modified residue" description="N6-acetyllysine" evidence="1">
    <location>
        <position position="92"/>
    </location>
</feature>
<feature type="modified residue" description="N6-acetyllysine" evidence="1">
    <location>
        <position position="109"/>
    </location>
</feature>